<name>YR705_MIMIV</name>
<keyword id="KW-1185">Reference proteome</keyword>
<keyword id="KW-0946">Virion</keyword>
<protein>
    <recommendedName>
        <fullName>Uncharacterized protein R705</fullName>
    </recommendedName>
</protein>
<organism>
    <name type="scientific">Acanthamoeba polyphaga mimivirus</name>
    <name type="common">APMV</name>
    <dbReference type="NCBI Taxonomy" id="212035"/>
    <lineage>
        <taxon>Viruses</taxon>
        <taxon>Varidnaviria</taxon>
        <taxon>Bamfordvirae</taxon>
        <taxon>Nucleocytoviricota</taxon>
        <taxon>Megaviricetes</taxon>
        <taxon>Imitervirales</taxon>
        <taxon>Mimiviridae</taxon>
        <taxon>Megamimivirinae</taxon>
        <taxon>Mimivirus</taxon>
        <taxon>Mimivirus bradfordmassiliense</taxon>
    </lineage>
</organism>
<feature type="chain" id="PRO_0000071330" description="Uncharacterized protein R705">
    <location>
        <begin position="1"/>
        <end position="313"/>
    </location>
</feature>
<feature type="region of interest" description="Disordered" evidence="1">
    <location>
        <begin position="1"/>
        <end position="313"/>
    </location>
</feature>
<feature type="compositionally biased region" description="Basic and acidic residues" evidence="1">
    <location>
        <begin position="24"/>
        <end position="33"/>
    </location>
</feature>
<feature type="compositionally biased region" description="Basic and acidic residues" evidence="1">
    <location>
        <begin position="40"/>
        <end position="85"/>
    </location>
</feature>
<feature type="compositionally biased region" description="Basic and acidic residues" evidence="1">
    <location>
        <begin position="95"/>
        <end position="116"/>
    </location>
</feature>
<feature type="compositionally biased region" description="Basic and acidic residues" evidence="1">
    <location>
        <begin position="156"/>
        <end position="181"/>
    </location>
</feature>
<feature type="compositionally biased region" description="Basic residues" evidence="1">
    <location>
        <begin position="194"/>
        <end position="205"/>
    </location>
</feature>
<feature type="compositionally biased region" description="Low complexity" evidence="1">
    <location>
        <begin position="206"/>
        <end position="266"/>
    </location>
</feature>
<feature type="compositionally biased region" description="Low complexity" evidence="1">
    <location>
        <begin position="272"/>
        <end position="313"/>
    </location>
</feature>
<gene>
    <name type="ordered locus">MIMI_R705</name>
</gene>
<sequence>MSRNGRNDYDYDDDYDNDQMGGRLARDRERDSEGYLYTKTGERNRRSGPEARERNRENALNRSRNDGRFAPERGGRGYGDDDVKYTKSGRVNGRTTREARERNSRTARSEERDELGRFIGKRGSSRATRGTYTEGANDAAQLLLGGKQGVAENPETDERHSDAFRMEHRRLAEERERDEFGRFLPTEDGEDGRRGRRSNSRRRSSNARSTSSRSSGSRSSGSRSSGSRSSGSRSTGSKTSSRSSGSKTSRSSGSSRSRSGSSGSKSGRSRNSRSGTSGRSSNSRSGSRSGSSSRSSNSRSGSRSSSRSGSSRR</sequence>
<organismHost>
    <name type="scientific">Acanthamoeba polyphaga</name>
    <name type="common">Amoeba</name>
    <dbReference type="NCBI Taxonomy" id="5757"/>
</organismHost>
<dbReference type="EMBL" id="AY653733">
    <property type="protein sequence ID" value="AAV50965.1"/>
    <property type="molecule type" value="Genomic_DNA"/>
</dbReference>
<dbReference type="KEGG" id="vg:9925358"/>
<dbReference type="Proteomes" id="UP000001134">
    <property type="component" value="Genome"/>
</dbReference>
<dbReference type="GO" id="GO:0044423">
    <property type="term" value="C:virion component"/>
    <property type="evidence" value="ECO:0007669"/>
    <property type="project" value="UniProtKB-KW"/>
</dbReference>
<proteinExistence type="evidence at protein level"/>
<accession>Q5UNW3</accession>
<evidence type="ECO:0000256" key="1">
    <source>
        <dbReference type="SAM" id="MobiDB-lite"/>
    </source>
</evidence>
<evidence type="ECO:0000269" key="2">
    <source>
    </source>
</evidence>
<reference key="1">
    <citation type="journal article" date="2004" name="Science">
        <title>The 1.2-megabase genome sequence of Mimivirus.</title>
        <authorList>
            <person name="Raoult D."/>
            <person name="Audic S."/>
            <person name="Robert C."/>
            <person name="Abergel C."/>
            <person name="Renesto P."/>
            <person name="Ogata H."/>
            <person name="La Scola B."/>
            <person name="Susan M."/>
            <person name="Claverie J.-M."/>
        </authorList>
    </citation>
    <scope>NUCLEOTIDE SEQUENCE [LARGE SCALE GENOMIC DNA]</scope>
    <source>
        <strain>Rowbotham-Bradford</strain>
    </source>
</reference>
<reference key="2">
    <citation type="journal article" date="2006" name="J. Virol.">
        <title>Mimivirus giant particles incorporate a large fraction of anonymous and unique gene products.</title>
        <authorList>
            <person name="Renesto P."/>
            <person name="Abergel C."/>
            <person name="Decloquement P."/>
            <person name="Moinier D."/>
            <person name="Azza S."/>
            <person name="Ogata H."/>
            <person name="Fourquet P."/>
            <person name="Gorvel J.-P."/>
            <person name="Claverie J.-M."/>
            <person name="Raoult D."/>
        </authorList>
    </citation>
    <scope>IDENTIFICATION BY MASS SPECTROMETRY [LARGE SCALE ANALYSIS]</scope>
    <scope>SUBCELLULAR LOCATION</scope>
</reference>
<comment type="subcellular location">
    <subcellularLocation>
        <location evidence="2">Virion</location>
    </subcellularLocation>
</comment>